<reference key="1">
    <citation type="journal article" date="2005" name="Gene">
        <title>Analysis of the very large G-protein coupled receptor gene (Vlgr1/Mass1/USH2C) in zebrafish.</title>
        <authorList>
            <person name="Gibert Y."/>
            <person name="McMillan D.R."/>
            <person name="Kayes-Wandover K."/>
            <person name="Meyer A."/>
            <person name="Begemann G."/>
            <person name="White P.C."/>
        </authorList>
    </citation>
    <scope>NUCLEOTIDE SEQUENCE [MRNA]</scope>
    <scope>DEVELOPMENTAL STAGE</scope>
</reference>
<organism>
    <name type="scientific">Danio rerio</name>
    <name type="common">Zebrafish</name>
    <name type="synonym">Brachydanio rerio</name>
    <dbReference type="NCBI Taxonomy" id="7955"/>
    <lineage>
        <taxon>Eukaryota</taxon>
        <taxon>Metazoa</taxon>
        <taxon>Chordata</taxon>
        <taxon>Craniata</taxon>
        <taxon>Vertebrata</taxon>
        <taxon>Euteleostomi</taxon>
        <taxon>Actinopterygii</taxon>
        <taxon>Neopterygii</taxon>
        <taxon>Teleostei</taxon>
        <taxon>Ostariophysi</taxon>
        <taxon>Cypriniformes</taxon>
        <taxon>Danionidae</taxon>
        <taxon>Danioninae</taxon>
        <taxon>Danio</taxon>
    </lineage>
</organism>
<sequence length="6199" mass="674630">MPAVLALSGLLLMLLTVSVRSESAELRFQGQTQFVVNESSRAIVRLVVERVGDPINVTALVLLQGDDTGDFEATTAAAFLLSSESSKTIFIAVKDDDIPEADETFVFILRLQSSSNGVTVGTPNTATITILSNDNAFGIISFNSSSLITVEESKGRSQYVPLTLLREKGTYGTVTVNFEIFGGPNPASEDLSPDMGNITFPPGRSVVVFSIMIQDDKLPEDDEIFTVQLTEAAGGALLNPNRSSVQIKISRNDAPIRFSKSTLVVPENIGVISLTVTRGRTEDGLLIGSDDKTVSVAYAIITGNGAASATPLTDFVDLQTERMVVFLPGVHEADLRFSIRDDNIPEIAESFQVVLLEETLLGDAVLVTPSLTLVTIEPNDKPYGVLSISPSPIQPHIINEDLNLIYEGMIIVRNGGTHGAVSVQWNITRNSTDRSPVSADLNPAAGTLRFSEGQMSAVLPLNITQDSLPEEAEAFLLKLIPGSVQGGAEVDEPMEMVFFIQDSDDVYGRFGFHPRENQSIQSQPEGRFLSLSFLREGGTLGEVRLTLTALYIPARPLDPSRARDGVLNGTSVNTVLFSSGQSRAQLILPIRNDAFLQNGAHFRIQLDSVELVNITPPIPSMSPRFAGALNISLIITPDIANGEIGFTSNQTVVALEPEDSNSSLITLQLRRDGTDGQAVVFWSLRPTGENKEDVTKGDISPFTGSVTFLSGQSEAVINLTVLADNIPEINETIILTLDRTNVDNQILKPGFTSREIVILENDDPGGVFEFSPVSKGPWFINEGETVELRVIRAQGQLLNQLIRYTVIPSGTAQFYGATGILEFQPGEREVMVALVAKPDGIPELDETFSVVLSSYSTPASRLGNRREVNITVRKSDDPFGVIEFIQPDLDFTINESKALGCLLSILPPLEKSRGRFGNVSIFWILEPTYSGDVKPVQGEIVFAEGEYQKNLTLSSVADEIPEKTENFTITLLNATGGARLGNILSARLSIRANDDPIYFAEPVGQRVREGGVANFTILRAGLANFVTTVNYRFEYGDTSSEDFIPESNDTMLVFHFGEWMKNISVAVVDDNIPETDEPFYIVLFNATGDAVVYGQITATVVIEANDDANGIFSLDSAQKPGEEGKTNNFYVLRDRGHFGNVTIYWQLFANDTPLEPYQEFVNTSGFITFRTGEKTKPIVLEVISDKLPEFNEFYELRLMNVSGGYPGEGGKLANRDLNASVLIPFNDDPFGVFAIAPDSLEREVAEDVLSVNDMTSVTSLTILRQQGTFGDVRVAWEILSGAFPRGLPPMEDLILMASFPSAVELQPHSRRRHAGTDALFFSGRPGAYGSISAETTLLVPQILANFTLSVWLKPKPNTDGFVVSKGNGNGTVYYGVQVQTNDSHVTIMLHYTTIGSNSTHVARATANTFVEDAWVHVIIAVEDGIIEFYLDGSPIPGGIKSLKGEAIVNDATPIRIGSNPDGEQRFTGLLQDVRLYSSCLNRSQIHELHNQPAKTDLHNVSGYLTYRQEEKEKSFLVEVRDDQEAEGEEVFYLQLVAVQGGARLPMPRPTAILKVMKSDNANGLFSFTGACIPDIAEEGSMISCVVERTRGALDYVYVNYTVTQLDSPADLSNASDFANATGFILFQPGQLSEVLNLLVVNDDLPEVDEHFRVRLVSAKSGDGKPGSTPTSGASIDPEKAVNNVTVKASDHPYGLLQFQTTPVPVGMIRPALEEARVTVQEEAGVVRLLVARAQGLLGRVMVGYRTSPFTAAGSEDYEGFLDFLPGERFKYINVTIIDNSVPELDKVFRVELYNPNGGVDPYFASEGSGSGESETDFFLPSFHYHHANLGAAARIIVTIAASDEAHGVFQFGADSLIVNGTEPEEGRSTVVLQVIRTFGALSNVTVYWEADAASEGELVYRSGNVNFEVGQTVRSIYLLISQDDVPELDKTFKVRLTNASHGRLGKETTATLTVLASDDPYGLFVFSDNTRPVRVAEANALVALTIQRRKGLMGRVRVAYRTLRDTDTVLYSTPGVGRASEGNDFIAVVDSVIFSANQSEVNVTLRVLDDNEPERAESVFLELVSVTLIEGLQPRPVALSPRLGPRNVTIAQVIIEASDDAFGVLQLSSSAVSVPEYYTGPIINVTRIGGIFADVSVKFRAVPLTARVGEDYRVASSDVVLLEGESSKPVPILIINDVVPELEETFRIELLNQTTGGALLGDLTQAIITILPSDDPFGLFVFQAAPITIEEPALTAFEVSVPIVRNAGTMGDVAVQWRATVNGRPATGDLRPVSGEVMFSPGETLKTLKVEVLPDDVPEIEEIIKVELVSATSGGNIGLEKVVDTIVPANDNPHGTVYFEQAVYRVQEPLEGIYIANVTIRRSGGNFGMLEVVYSTLEVDIVSNALKEGRNFLVYYDSRLAGVPSNAIRRPINITTSTNVLNFCAAFCLRERACQAFSFTNTTTPSCFWVTSGVSQLSPSPQTFTYLKNTTATASLFSSQAVAGSDFITMTAQTTTMLDGSGVANLTVPILTDSLPEMDESFIIKILKVSLVNVTATARNLPTIRQPDTALVTIGMNGDAFGIFLLYSINPNATQEGLYLEVREEPKTTVLLVIERRGGSMGQVTVEWKYVGGSATPNADFNGTGETLIFAEGDVKKTLEFIITDDTEPENNETLQIGLVSTEGGSRILPSSDTVTILILANDNAAGVVGFHTASRSRIVREGESVTLLVERTAPAIGNVAVDWRIEGPLVPTTFADTSGTLFFSEGILNNTIVLKLLEDTTPEDREEYRVILSNIQTTGVTKTGIAALSAQGREAVVSVEASDEPFGLLSIAPSSLQVTTDEKNTTIRIYINREFGASGAVNISYETVRGSLQDLRQTEGALAQPGQDFRYVSNSVIMQDGQTSVSIPITIIDDDIPELQEFFLVNITSAVLITTLPTAPKLNTEGLVAEIIINANDGIRGIIGWQNIDYVVNETIGVLTLVAYRDAGTYGNVSLFFYAQNLEAQLGLDFNATPSMIYFVDGERHKFIEVQILDDAVPEGGETFQLILANPSAGLQLGENTTATVMILANDDGHGIISFNNSEHFLLREPTSVSGLGTSVATLYIIRDPPQGTFGTVTVQFTITDVNGSLYTDDLTPSSGFVVLEDGVRYKTLEIWAVLDAEPEMNETFTVTLSNPTGGARLGVSLQTFITVLENQAPLGLFRISPSINRTLDTMTVEEHMGTVFLTVSRSNGLESAVSVEWETRSGTAFGMRGEQPVLAVYQSIRDSFASVWCSVPSGDAALVLRLIKGLTQNQTVLYKWQGVFVPVEFVSIQNPKSCVGFTVNGSSYVAVSHADNTVSLTTNISLFRVQADLNLTLEQTFSVSGFSVKHFSTDLKQYLIASSEIFVWNRGSFFLHQSLELQDIIAAVPFRRGSSNVQHLAVCRNRTSAACFIYQWTDGRFQNPQPLALNTEVKQVESHQMGGDTFLFIVTEGLNPACEVFLWGSQQTVFQQTQSILVPGLFSVHPFTTPSGIFHLLLAGVNGSALYSWRSELRQFAEMLKSASAQEFLYLPVPSINSPKSLILASGKSSSLVYELTSVSNQSDFIPSSGELFFQPGVQELEIAVNVIDDDVPEEEEHFRVSLKNPKGGAEIGFRGQVTFFIPANDDTYGIIGFSQNSLMREVEELQSDNPVSLSIERRRGRFGRLTVHWSAYGSLDDIFPTSGVVTFSESQAVATISLNVLADDIPELAEKVTIVLTKVTTIGIIDPSRGASIDYQRAQANLTIRANGSPYGVIGWHLDSQYFITPEPQKSPSNITLSIVRDQGSSGNVLVYYSTKPALHLLPLNQASGGTDYVAKEATVVMMENATVVLVFLTILPDDIPELAETFFVNITRVEVLGGDTGAAQPSVKRPGLEIAEVTIQENDDPRGVLSFNVSKDVSGAVLAFEVPSPGNVLRLAVMRMAGIFGRLVLYWETQSVTASTEDFTPSSGNITFQDGQAMAYIEITIIDDTIVESTETFMVKLIRVIGGARLGVETSVVVSIPANDSPFGRFGFEELKVSVSEPQFLNDPASVATLTVVRSSGGEGVVHLIWLLQEESRDDLSPRNGTLIFNGTESKKTLVIQALADAVLEGEESFTIQLLSPKNEPVIDPVRGVATVVIRPDVGALGTVGIADSSRNVLIGEPICSYNGTALISLIRGPGIFGEIEIFWNITTAAVSEFEETSGKVVMKDRQSAATIQLKALDDEIPEERRVYQLRLSSLTPGSVINPDRQFASITMAASDLPHGLFSFSQASLRATEEDRAVNVTIVRSMGLFGSVWVSFHTEGRTAISGQDFGQSSGRPLFRPGESSRVIPLVIFDDDLPEGPEEFFLNITLVELLNASSMDFTVREYGLQIDQPPAIGNLSSLMVIIQKNDNAEGILEFDPKYVNNTVEEDVGTLSIPVLRRVGSYGQVTVQFVSKGLTAQPDSDYILLNGSITFQHGQTLSYINVSIVDDTESEFNEIFELQLTGATGGAILGAQLIARITIAKSDSPNGVVRFINQSAITIPNPNSTVRLSLFAERADGLLGDATVMWHIQGPNSNEVLPSMNTDIEPVNGTFSFRDGEGGVRSIDLKILPHGEVEVTEKFIIMLSVISGEMGVDPRAGSVTLTIEKFGDPNGIVQFTEQDLKERIYSEPSDSEGPLKVSVLVTRREGVMGNITVFWEILSDADTSGDFAALRGSVIILAGQRLAEIILTLLPDSVPELEETYTLRLTSVEGGAELDLNRSSTRLKVRANDEPHGVFVMYSQNQSVVVNAADRSRQLIISVNRLAGAFGNASVGYRISFTTPGQSFTEDTITGNILVKDGEREASIRVPVSSQVFFVTGFNFSVELTDVTLIGPLLGSPPRIQLESKLAVVSVPEVAANPVVGFASLALRVLDIESGQCEALVTRTGLYGNITVRWSSGFPPGQTPPGYQPGEILPRSGSIMLAHGQRSELISFTALNNISVVTAHAIYLTSVESESPGGARLRTGYTVAEVEPLGLYQFHPNSQHLVIEEDVQTITLYVQRFYGFRSNRSSVSYRTWPGTAQPDKDYVPVTDGQLLFDSRQTSASIRLSILDDTLTEPDEDFYVNLTSVRVLSTTLPLITAQPGIVQKNSISTVTIRANDVVSGFLSIGPAVKLISEDSVEDSPQQKLQLRVRRTAGLSGVVSAKIRAYAGLKTPLVDASQFHREHKGTWALEGEDFALETQSVTLLEGQNEVEVTVIMLNDQEPEGQEAFFIYLSDAEGGAQIVSVPDELGFTSFAKIIILGSDLQNGIVGFSLSSLSGQVLDEDSVNRTVTLVLQRQENRAFEDVLVFWRVTFSTTDHALVSHGVDLSKELLQTSGTSIRRKGEVLCALKLEVQPDKNPEYEVWFLVEVYKVGEGAAINQTARFANITMLESDDPRGLVYFAQGSRLPVVTLKATSVSLQIYRDASTASSISVEYRMQELPKVESIGPSLVWPAVAGQDFVMSEGTLTFEIGQSSAGLNIDLTPNIGSSNLTPKRFQVVLSDATGGARVHPEFGLANVTLVSDTETQAVWALLDQLHQPLEETIINRVLHALINKVSRDITPEQLMAVLDASSKILSDAEQTPLKDSSRGLTYDLLCAMANPNRTDTQGVSQLSEVAERFAYSLLTDIKCGAEGKRGITILDNCPYFTIAAHHWYPMQINGHTFIGKNTDTFTLPETLLEVPALPADSTAPSACYKVHFTEYSTEHWFLTNKKPSALNGKVFSVSLYGRGSKPLSEGQEVVYRIHTPDRRGKPKPSQSLCLLWNQAAESWLSDGQFCRLVDDTQNYVECACSHLSIYTAYAEIESLASFNEAFYAAGFICISGFALAMVSHLMCARFLMFAAKLLTHMMVACLGTQICFLVSAFRGRMFSEDSCAALGLFFHYFHLSQFGWMLVQAINFWQILVMNDEHTERRYLLYFLLSWGLPALVIIVLVVVLLGGFGWSIHSVYGLVQGDLCFIPNVYAALCTAALVPLICLVGVLVIFIHAYQVTQQWKAYDDIYRGRTNSSEVPMMLYLFALVTLVCVWAGLHMAYRYIWMLILLVIFNIFLGLYVFSVYFVMHNQLFWPGKATYTVEMNGHSSPDSIYQSTGAATVGGGEISKSTQNLISAMEEISADWERASLRPSSQPSSIFKPSPQDEAYITEGGFINTSLVRDEESQEFDDLIFALKTGSGLNVSDNESIHGSHDGGSMANSQIVELRRIPIADTHL</sequence>
<proteinExistence type="evidence at transcript level"/>
<evidence type="ECO:0000250" key="1">
    <source>
        <dbReference type="UniProtKB" id="Q8VHN7"/>
    </source>
</evidence>
<evidence type="ECO:0000250" key="2">
    <source>
        <dbReference type="UniProtKB" id="Q8WXG9"/>
    </source>
</evidence>
<evidence type="ECO:0000255" key="3"/>
<evidence type="ECO:0000255" key="4">
    <source>
        <dbReference type="PROSITE-ProRule" id="PRU00075"/>
    </source>
</evidence>
<evidence type="ECO:0000255" key="5">
    <source>
        <dbReference type="PROSITE-ProRule" id="PRU00098"/>
    </source>
</evidence>
<evidence type="ECO:0000269" key="6">
    <source>
    </source>
</evidence>
<evidence type="ECO:0000305" key="7"/>
<keyword id="KW-0106">Calcium</keyword>
<keyword id="KW-1003">Cell membrane</keyword>
<keyword id="KW-0966">Cell projection</keyword>
<keyword id="KW-0217">Developmental protein</keyword>
<keyword id="KW-1015">Disulfide bond</keyword>
<keyword id="KW-0297">G-protein coupled receptor</keyword>
<keyword id="KW-0378">Hydrolase</keyword>
<keyword id="KW-0472">Membrane</keyword>
<keyword id="KW-0675">Receptor</keyword>
<keyword id="KW-1185">Reference proteome</keyword>
<keyword id="KW-0677">Repeat</keyword>
<keyword id="KW-0732">Signal</keyword>
<keyword id="KW-0807">Transducer</keyword>
<keyword id="KW-0812">Transmembrane</keyword>
<keyword id="KW-1133">Transmembrane helix</keyword>
<feature type="signal peptide" evidence="3">
    <location>
        <begin position="1"/>
        <end position="23"/>
    </location>
</feature>
<feature type="chain" id="PRO_0000232737" description="Adhesion G-protein coupled receptor V1">
    <location>
        <begin position="24"/>
        <end position="6199"/>
    </location>
</feature>
<feature type="topological domain" description="Extracellular" evidence="3">
    <location>
        <begin position="24"/>
        <end position="5803"/>
    </location>
</feature>
<feature type="transmembrane region" description="Helical; Name=1" evidence="3">
    <location>
        <begin position="5804"/>
        <end position="5824"/>
    </location>
</feature>
<feature type="topological domain" description="Cytoplasmic" evidence="3">
    <location>
        <begin position="5825"/>
        <end position="5834"/>
    </location>
</feature>
<feature type="transmembrane region" description="Helical; Name=2" evidence="3">
    <location>
        <begin position="5835"/>
        <end position="5855"/>
    </location>
</feature>
<feature type="topological domain" description="Extracellular" evidence="3">
    <location>
        <begin position="5856"/>
        <end position="5864"/>
    </location>
</feature>
<feature type="transmembrane region" description="Helical; Name=3" evidence="3">
    <location>
        <begin position="5865"/>
        <end position="5885"/>
    </location>
</feature>
<feature type="topological domain" description="Cytoplasmic" evidence="3">
    <location>
        <begin position="5886"/>
        <end position="5908"/>
    </location>
</feature>
<feature type="transmembrane region" description="Helical; Name=4" evidence="3">
    <location>
        <begin position="5909"/>
        <end position="5929"/>
    </location>
</feature>
<feature type="topological domain" description="Extracellular" evidence="3">
    <location>
        <begin position="5930"/>
        <end position="5954"/>
    </location>
</feature>
<feature type="transmembrane region" description="Helical; Name=5" evidence="3">
    <location>
        <begin position="5955"/>
        <end position="5975"/>
    </location>
</feature>
<feature type="topological domain" description="Cytoplasmic" evidence="3">
    <location>
        <begin position="5976"/>
        <end position="6001"/>
    </location>
</feature>
<feature type="transmembrane region" description="Helical; Name=6" evidence="3">
    <location>
        <begin position="6002"/>
        <end position="6022"/>
    </location>
</feature>
<feature type="topological domain" description="Extracellular" evidence="3">
    <location>
        <begin position="6023"/>
        <end position="6025"/>
    </location>
</feature>
<feature type="transmembrane region" description="Helical; Name=7" evidence="3">
    <location>
        <begin position="6026"/>
        <end position="6046"/>
    </location>
</feature>
<feature type="topological domain" description="Cytoplasmic" evidence="3">
    <location>
        <begin position="6047"/>
        <end position="6199"/>
    </location>
</feature>
<feature type="domain" description="Calx-beta 1" evidence="7">
    <location>
        <begin position="24"/>
        <end position="109"/>
    </location>
</feature>
<feature type="domain" description="Calx-beta 2" evidence="3">
    <location>
        <begin position="126"/>
        <end position="230"/>
    </location>
</feature>
<feature type="domain" description="Calx-beta 3" evidence="3">
    <location>
        <begin position="249"/>
        <end position="355"/>
    </location>
</feature>
<feature type="domain" description="Calx-beta 4" evidence="7">
    <location>
        <begin position="380"/>
        <end position="480"/>
    </location>
</feature>
<feature type="domain" description="Calx-beta 5" evidence="7">
    <location>
        <begin position="637"/>
        <end position="737"/>
    </location>
</feature>
<feature type="domain" description="Calx-beta 6" evidence="7">
    <location>
        <begin position="753"/>
        <end position="853"/>
    </location>
</feature>
<feature type="domain" description="Calx-beta 7" evidence="7">
    <location>
        <begin position="869"/>
        <end position="972"/>
    </location>
</feature>
<feature type="domain" description="Calx-beta 8" evidence="3">
    <location>
        <begin position="997"/>
        <end position="1083"/>
    </location>
</feature>
<feature type="domain" description="Calx-beta 9" evidence="7">
    <location>
        <begin position="1099"/>
        <end position="1199"/>
    </location>
</feature>
<feature type="domain" description="Calx-beta 10" evidence="7">
    <location>
        <begin position="1434"/>
        <end position="1534"/>
    </location>
</feature>
<feature type="domain" description="Calx-beta 11" evidence="3">
    <location>
        <begin position="1563"/>
        <end position="1655"/>
    </location>
</feature>
<feature type="domain" description="Calx-beta 12" evidence="7">
    <location>
        <begin position="1835"/>
        <end position="1937"/>
    </location>
</feature>
<feature type="domain" description="Calx-beta 13" evidence="3">
    <location>
        <begin position="1963"/>
        <end position="2063"/>
    </location>
</feature>
<feature type="domain" description="Calx-beta 14" evidence="3">
    <location>
        <begin position="2092"/>
        <end position="2190"/>
    </location>
</feature>
<feature type="domain" description="Calx-beta 15" evidence="3">
    <location>
        <begin position="2208"/>
        <end position="2308"/>
    </location>
</feature>
<feature type="domain" description="Calx-beta 16" evidence="7">
    <location>
        <begin position="2425"/>
        <end position="2525"/>
    </location>
</feature>
<feature type="domain" description="Calx-beta 17" evidence="3">
    <location>
        <begin position="2582"/>
        <end position="2659"/>
    </location>
</feature>
<feature type="domain" description="Calx-beta 18" evidence="7">
    <location>
        <begin position="2673"/>
        <end position="2773"/>
    </location>
</feature>
<feature type="domain" description="Calx-beta 19" evidence="3">
    <location>
        <begin position="2814"/>
        <end position="2908"/>
    </location>
</feature>
<feature type="domain" description="Calx-beta 20" evidence="3">
    <location>
        <begin position="2931"/>
        <end position="3029"/>
    </location>
</feature>
<feature type="domain" description="Calx-beta 21" evidence="7">
    <location>
        <begin position="3054"/>
        <end position="3154"/>
    </location>
</feature>
<feature type="repeat" description="EAR 1" evidence="4">
    <location>
        <begin position="3239"/>
        <end position="3284"/>
    </location>
</feature>
<feature type="repeat" description="EAR 2" evidence="4">
    <location>
        <begin position="3285"/>
        <end position="3333"/>
    </location>
</feature>
<feature type="repeat" description="EAR 3" evidence="4">
    <location>
        <begin position="3336"/>
        <end position="3372"/>
    </location>
</feature>
<feature type="repeat" description="EAR 4" evidence="4">
    <location>
        <begin position="3374"/>
        <end position="3420"/>
    </location>
</feature>
<feature type="repeat" description="EAR 5" evidence="4">
    <location>
        <begin position="3422"/>
        <end position="3467"/>
    </location>
</feature>
<feature type="repeat" description="EAR 6" evidence="4">
    <location>
        <begin position="3471"/>
        <end position="3513"/>
    </location>
</feature>
<feature type="domain" description="Calx-beta 22" evidence="3">
    <location>
        <begin position="3562"/>
        <end position="3605"/>
    </location>
</feature>
<feature type="domain" description="Calx-beta 23" evidence="7">
    <location>
        <begin position="3619"/>
        <end position="3719"/>
    </location>
</feature>
<feature type="domain" description="Calx-beta 24" evidence="3">
    <location>
        <begin position="3778"/>
        <end position="3854"/>
    </location>
</feature>
<feature type="domain" description="Calx-beta 25" evidence="3">
    <location>
        <begin position="3916"/>
        <end position="3985"/>
    </location>
</feature>
<feature type="domain" description="Calx-beta 26" evidence="3">
    <location>
        <begin position="4000"/>
        <end position="4103"/>
    </location>
</feature>
<feature type="domain" description="Calx-beta 27" evidence="7">
    <location>
        <begin position="4120"/>
        <end position="4220"/>
    </location>
</feature>
<feature type="domain" description="Calx-beta 28" evidence="3">
    <location>
        <begin position="4247"/>
        <end position="4335"/>
    </location>
</feature>
<feature type="domain" description="Calx-beta 29" evidence="3">
    <location>
        <begin position="4371"/>
        <end position="4471"/>
    </location>
</feature>
<feature type="domain" description="Calx-beta 30" evidence="7">
    <location>
        <begin position="4493"/>
        <end position="4593"/>
    </location>
</feature>
<feature type="domain" description="Calx-beta 31" evidence="7">
    <location>
        <begin position="4615"/>
        <end position="4715"/>
    </location>
</feature>
<feature type="domain" description="Calx-beta 32" evidence="3">
    <location>
        <begin position="4993"/>
        <end position="5076"/>
    </location>
</feature>
<feature type="domain" description="Calx-beta 33" evidence="7">
    <location>
        <begin position="5125"/>
        <end position="5225"/>
    </location>
</feature>
<feature type="domain" description="Calx-beta 34" evidence="7">
    <location>
        <begin position="5260"/>
        <end position="5360"/>
    </location>
</feature>
<feature type="domain" description="GAIN-B" evidence="5">
    <location>
        <begin position="5636"/>
        <end position="5801"/>
    </location>
</feature>
<feature type="region of interest" description="GPS" evidence="5">
    <location>
        <begin position="5751"/>
        <end position="5801"/>
    </location>
</feature>
<feature type="site" description="Cleavage; by autolysis" evidence="5">
    <location>
        <begin position="5785"/>
        <end position="5786"/>
    </location>
</feature>
<feature type="disulfide bond" evidence="5">
    <location>
        <begin position="5751"/>
        <end position="5780"/>
    </location>
</feature>
<feature type="disulfide bond" evidence="5">
    <location>
        <begin position="5768"/>
        <end position="5782"/>
    </location>
</feature>
<dbReference type="EC" id="3.4.-.-" evidence="1"/>
<dbReference type="EMBL" id="AY540131">
    <property type="protein sequence ID" value="AAT07468.1"/>
    <property type="molecule type" value="mRNA"/>
</dbReference>
<dbReference type="FunCoup" id="Q6JAN0">
    <property type="interactions" value="398"/>
</dbReference>
<dbReference type="STRING" id="7955.ENSDARP00000020853"/>
<dbReference type="PaxDb" id="7955-ENSDARP00000020853"/>
<dbReference type="AGR" id="ZFIN:ZDB-GENE-040624-6"/>
<dbReference type="ZFIN" id="ZDB-GENE-040624-6">
    <property type="gene designation" value="adgrv1"/>
</dbReference>
<dbReference type="eggNOG" id="KOG1306">
    <property type="taxonomic scope" value="Eukaryota"/>
</dbReference>
<dbReference type="eggNOG" id="KOG4193">
    <property type="taxonomic scope" value="Eukaryota"/>
</dbReference>
<dbReference type="InParanoid" id="Q6JAN0"/>
<dbReference type="PhylomeDB" id="Q6JAN0"/>
<dbReference type="PRO" id="PR:Q6JAN0"/>
<dbReference type="Proteomes" id="UP000000437">
    <property type="component" value="Unplaced"/>
</dbReference>
<dbReference type="GO" id="GO:0005737">
    <property type="term" value="C:cytoplasm"/>
    <property type="evidence" value="ECO:0000318"/>
    <property type="project" value="GO_Central"/>
</dbReference>
<dbReference type="GO" id="GO:0001917">
    <property type="term" value="C:photoreceptor inner segment"/>
    <property type="evidence" value="ECO:0007669"/>
    <property type="project" value="UniProtKB-SubCell"/>
</dbReference>
<dbReference type="GO" id="GO:0032420">
    <property type="term" value="C:stereocilium"/>
    <property type="evidence" value="ECO:0000318"/>
    <property type="project" value="GO_Central"/>
</dbReference>
<dbReference type="GO" id="GO:0060171">
    <property type="term" value="C:stereocilium membrane"/>
    <property type="evidence" value="ECO:0007669"/>
    <property type="project" value="UniProtKB-SubCell"/>
</dbReference>
<dbReference type="GO" id="GO:0010855">
    <property type="term" value="F:adenylate cyclase inhibitor activity"/>
    <property type="evidence" value="ECO:0000250"/>
    <property type="project" value="UniProtKB"/>
</dbReference>
<dbReference type="GO" id="GO:0004930">
    <property type="term" value="F:G protein-coupled receptor activity"/>
    <property type="evidence" value="ECO:0000250"/>
    <property type="project" value="UniProtKB"/>
</dbReference>
<dbReference type="GO" id="GO:0001965">
    <property type="term" value="F:G-protein alpha-subunit binding"/>
    <property type="evidence" value="ECO:0000250"/>
    <property type="project" value="UniProtKB"/>
</dbReference>
<dbReference type="GO" id="GO:0016787">
    <property type="term" value="F:hydrolase activity"/>
    <property type="evidence" value="ECO:0007669"/>
    <property type="project" value="UniProtKB-KW"/>
</dbReference>
<dbReference type="GO" id="GO:0007166">
    <property type="term" value="P:cell surface receptor signaling pathway"/>
    <property type="evidence" value="ECO:0007669"/>
    <property type="project" value="InterPro"/>
</dbReference>
<dbReference type="GO" id="GO:0071277">
    <property type="term" value="P:cellular response to calcium ion"/>
    <property type="evidence" value="ECO:0000250"/>
    <property type="project" value="UniProtKB"/>
</dbReference>
<dbReference type="GO" id="GO:0042462">
    <property type="term" value="P:eye photoreceptor cell development"/>
    <property type="evidence" value="ECO:0000316"/>
    <property type="project" value="ZFIN"/>
</dbReference>
<dbReference type="GO" id="GO:0007186">
    <property type="term" value="P:G protein-coupled receptor signaling pathway"/>
    <property type="evidence" value="ECO:0000250"/>
    <property type="project" value="UniProtKB"/>
</dbReference>
<dbReference type="GO" id="GO:0007194">
    <property type="term" value="P:negative regulation of adenylate cyclase activity"/>
    <property type="evidence" value="ECO:0000250"/>
    <property type="project" value="UniProtKB"/>
</dbReference>
<dbReference type="GO" id="GO:0010739">
    <property type="term" value="P:positive regulation of protein kinase A signaling"/>
    <property type="evidence" value="ECO:0000250"/>
    <property type="project" value="UniProtKB"/>
</dbReference>
<dbReference type="GO" id="GO:0031647">
    <property type="term" value="P:regulation of protein stability"/>
    <property type="evidence" value="ECO:0000250"/>
    <property type="project" value="UniProtKB"/>
</dbReference>
<dbReference type="GO" id="GO:0097264">
    <property type="term" value="P:self proteolysis"/>
    <property type="evidence" value="ECO:0000250"/>
    <property type="project" value="UniProtKB"/>
</dbReference>
<dbReference type="GO" id="GO:0007605">
    <property type="term" value="P:sensory perception of sound"/>
    <property type="evidence" value="ECO:0000318"/>
    <property type="project" value="GO_Central"/>
</dbReference>
<dbReference type="GO" id="GO:0007601">
    <property type="term" value="P:visual perception"/>
    <property type="evidence" value="ECO:0000315"/>
    <property type="project" value="ZFIN"/>
</dbReference>
<dbReference type="CDD" id="cd13952">
    <property type="entry name" value="7tm_classB"/>
    <property type="match status" value="1"/>
</dbReference>
<dbReference type="FunFam" id="2.60.40.2030:FF:000017">
    <property type="entry name" value="Adhesion G protein-coupled receptor V1"/>
    <property type="match status" value="5"/>
</dbReference>
<dbReference type="FunFam" id="2.60.40.2030:FF:000020">
    <property type="entry name" value="Adhesion G protein-coupled receptor V1"/>
    <property type="match status" value="2"/>
</dbReference>
<dbReference type="FunFam" id="2.60.40.2030:FF:000021">
    <property type="entry name" value="Adhesion G protein-coupled receptor V1"/>
    <property type="match status" value="1"/>
</dbReference>
<dbReference type="FunFam" id="2.60.40.2030:FF:000023">
    <property type="entry name" value="Adhesion G protein-coupled receptor V1"/>
    <property type="match status" value="1"/>
</dbReference>
<dbReference type="FunFam" id="2.60.40.2030:FF:000031">
    <property type="entry name" value="Adhesion G protein-coupled receptor V1"/>
    <property type="match status" value="1"/>
</dbReference>
<dbReference type="FunFam" id="2.60.40.2030:FF:000007">
    <property type="entry name" value="Adhesion G-protein coupled receptor V1"/>
    <property type="match status" value="8"/>
</dbReference>
<dbReference type="FunFam" id="2.60.40.2030:FF:000013">
    <property type="entry name" value="Adhesion G-protein coupled receptor V1"/>
    <property type="match status" value="1"/>
</dbReference>
<dbReference type="FunFam" id="2.60.40.2030:FF:000028">
    <property type="entry name" value="Adhesion G-protein coupled receptor V1"/>
    <property type="match status" value="1"/>
</dbReference>
<dbReference type="FunFam" id="2.60.40.2030:FF:000048">
    <property type="entry name" value="Adhesion G-protein coupled receptor V1"/>
    <property type="match status" value="1"/>
</dbReference>
<dbReference type="FunFam" id="2.60.40.2030:FF:000009">
    <property type="entry name" value="adhesion G-protein coupled receptor V1"/>
    <property type="match status" value="2"/>
</dbReference>
<dbReference type="Gene3D" id="2.60.120.200">
    <property type="match status" value="1"/>
</dbReference>
<dbReference type="Gene3D" id="2.60.220.50">
    <property type="match status" value="1"/>
</dbReference>
<dbReference type="Gene3D" id="2.60.40.2030">
    <property type="match status" value="35"/>
</dbReference>
<dbReference type="Gene3D" id="1.20.1070.10">
    <property type="entry name" value="Rhodopsin 7-helix transmembrane proteins"/>
    <property type="match status" value="1"/>
</dbReference>
<dbReference type="InterPro" id="IPR026919">
    <property type="entry name" value="ADGRV1"/>
</dbReference>
<dbReference type="InterPro" id="IPR038081">
    <property type="entry name" value="CalX-like_sf"/>
</dbReference>
<dbReference type="InterPro" id="IPR003644">
    <property type="entry name" value="Calx_beta"/>
</dbReference>
<dbReference type="InterPro" id="IPR013320">
    <property type="entry name" value="ConA-like_dom_sf"/>
</dbReference>
<dbReference type="InterPro" id="IPR009039">
    <property type="entry name" value="EAR"/>
</dbReference>
<dbReference type="InterPro" id="IPR057244">
    <property type="entry name" value="GAIN_B"/>
</dbReference>
<dbReference type="InterPro" id="IPR046338">
    <property type="entry name" value="GAIN_dom_sf"/>
</dbReference>
<dbReference type="InterPro" id="IPR017981">
    <property type="entry name" value="GPCR_2-like_7TM"/>
</dbReference>
<dbReference type="InterPro" id="IPR000832">
    <property type="entry name" value="GPCR_2_secretin-like"/>
</dbReference>
<dbReference type="InterPro" id="IPR006558">
    <property type="entry name" value="LamG-like"/>
</dbReference>
<dbReference type="InterPro" id="IPR003609">
    <property type="entry name" value="Pan_app"/>
</dbReference>
<dbReference type="PANTHER" id="PTHR46682">
    <property type="entry name" value="ADHESION G-PROTEIN COUPLED RECEPTOR V1"/>
    <property type="match status" value="1"/>
</dbReference>
<dbReference type="PANTHER" id="PTHR46682:SF1">
    <property type="entry name" value="ADHESION G-PROTEIN COUPLED RECEPTOR V1"/>
    <property type="match status" value="1"/>
</dbReference>
<dbReference type="Pfam" id="PF00002">
    <property type="entry name" value="7tm_2"/>
    <property type="match status" value="1"/>
</dbReference>
<dbReference type="Pfam" id="PF03160">
    <property type="entry name" value="Calx-beta"/>
    <property type="match status" value="34"/>
</dbReference>
<dbReference type="Pfam" id="PF13385">
    <property type="entry name" value="Laminin_G_3"/>
    <property type="match status" value="1"/>
</dbReference>
<dbReference type="SMART" id="SM00237">
    <property type="entry name" value="Calx_beta"/>
    <property type="match status" value="19"/>
</dbReference>
<dbReference type="SMART" id="SM00560">
    <property type="entry name" value="LamGL"/>
    <property type="match status" value="1"/>
</dbReference>
<dbReference type="SUPFAM" id="SSF141072">
    <property type="entry name" value="CalX-like"/>
    <property type="match status" value="38"/>
</dbReference>
<dbReference type="SUPFAM" id="SSF49899">
    <property type="entry name" value="Concanavalin A-like lectins/glucanases"/>
    <property type="match status" value="1"/>
</dbReference>
<dbReference type="PROSITE" id="PS50912">
    <property type="entry name" value="EAR"/>
    <property type="match status" value="6"/>
</dbReference>
<dbReference type="PROSITE" id="PS50261">
    <property type="entry name" value="G_PROTEIN_RECEP_F2_4"/>
    <property type="match status" value="1"/>
</dbReference>
<dbReference type="PROSITE" id="PS50221">
    <property type="entry name" value="GAIN_B"/>
    <property type="match status" value="1"/>
</dbReference>
<protein>
    <recommendedName>
        <fullName evidence="7">Adhesion G-protein coupled receptor V1</fullName>
        <ecNumber evidence="1">3.4.-.-</ecNumber>
    </recommendedName>
    <alternativeName>
        <fullName>G-protein coupled receptor 98</fullName>
    </alternativeName>
    <alternativeName>
        <fullName>Monogenic audiogenic seizure susceptibility protein 1 homolog</fullName>
    </alternativeName>
    <alternativeName>
        <fullName>Very large G-protein coupled receptor 1</fullName>
    </alternativeName>
</protein>
<name>AGRV1_DANRE</name>
<accession>Q6JAN0</accession>
<comment type="function">
    <text evidence="1 2">Receptor that may have an important role in the development of the sensory nervous system.</text>
</comment>
<comment type="subunit">
    <text evidence="5">Heterodimer of 2 chains generated by proteolytic processing; the large extracellular N-terminal fragment and the membrane-bound C-terminal fragment predominantly remain associated and non-covalently linked.</text>
</comment>
<comment type="subcellular location">
    <subcellularLocation>
        <location evidence="1">Cell membrane</location>
        <topology evidence="1">Multi-pass membrane protein</topology>
    </subcellularLocation>
    <subcellularLocation>
        <location evidence="1">Cell projection</location>
        <location evidence="1">Stereocilium membrane</location>
    </subcellularLocation>
    <subcellularLocation>
        <location evidence="1">Photoreceptor inner segment</location>
    </subcellularLocation>
</comment>
<comment type="developmental stage">
    <text evidence="6">Weak expression was first detected at 20 hours post-fertilization (hpf) in the ventral diencephalon. At 24-26 hpf, expression is prominent in the prospective fore-, mid- and hindbrain including the ventral part of the epiphysis. Expression is not detected outside of the central nervous system (CNS) at this stage. At 48 hpf and 72 hpf, expression is detected in the posterior dorsal tegmentum, the mid-hindbrain boundary and in the lower rhombic lip. Expression in the eye is associated with the optic nerve. Outside the CNS, expressed in the anteriorpronephric duct.</text>
</comment>
<comment type="PTM">
    <text evidence="5">Autoproteolytically processed at the GPS region of the GAIN-B domain; this cleavage modulates receptor activity.</text>
</comment>
<comment type="similarity">
    <text evidence="7">Belongs to the G-protein coupled receptor 2 family. Adhesion G-protein coupled receptor (ADGR) subfamily.</text>
</comment>
<gene>
    <name type="primary">adgrv1</name>
    <name type="synonym">gpr98</name>
    <name type="synonym">mass1</name>
    <name type="synonym">vlgr1</name>
</gene>